<accession>A0KHE0</accession>
<reference key="1">
    <citation type="journal article" date="2006" name="J. Bacteriol.">
        <title>Genome sequence of Aeromonas hydrophila ATCC 7966T: jack of all trades.</title>
        <authorList>
            <person name="Seshadri R."/>
            <person name="Joseph S.W."/>
            <person name="Chopra A.K."/>
            <person name="Sha J."/>
            <person name="Shaw J."/>
            <person name="Graf J."/>
            <person name="Haft D.H."/>
            <person name="Wu M."/>
            <person name="Ren Q."/>
            <person name="Rosovitz M.J."/>
            <person name="Madupu R."/>
            <person name="Tallon L."/>
            <person name="Kim M."/>
            <person name="Jin S."/>
            <person name="Vuong H."/>
            <person name="Stine O.C."/>
            <person name="Ali A."/>
            <person name="Horneman A.J."/>
            <person name="Heidelberg J.F."/>
        </authorList>
    </citation>
    <scope>NUCLEOTIDE SEQUENCE [LARGE SCALE GENOMIC DNA]</scope>
    <source>
        <strain>ATCC 7966 / DSM 30187 / BCRC 13018 / CCUG 14551 / JCM 1027 / KCTC 2358 / NCIMB 9240 / NCTC 8049</strain>
    </source>
</reference>
<protein>
    <recommendedName>
        <fullName evidence="1">Ribosomal RNA large subunit methyltransferase M</fullName>
        <ecNumber evidence="1">2.1.1.186</ecNumber>
    </recommendedName>
    <alternativeName>
        <fullName evidence="1">23S rRNA (cytidine2498-2'-O)-methyltransferase</fullName>
    </alternativeName>
    <alternativeName>
        <fullName evidence="1">23S rRNA 2'-O-ribose methyltransferase RlmM</fullName>
    </alternativeName>
</protein>
<evidence type="ECO:0000255" key="1">
    <source>
        <dbReference type="HAMAP-Rule" id="MF_01551"/>
    </source>
</evidence>
<comment type="function">
    <text evidence="1">Catalyzes the 2'-O-methylation at nucleotide C2498 in 23S rRNA.</text>
</comment>
<comment type="catalytic activity">
    <reaction evidence="1">
        <text>cytidine(2498) in 23S rRNA + S-adenosyl-L-methionine = 2'-O-methylcytidine(2498) in 23S rRNA + S-adenosyl-L-homocysteine + H(+)</text>
        <dbReference type="Rhea" id="RHEA:42788"/>
        <dbReference type="Rhea" id="RHEA-COMP:10244"/>
        <dbReference type="Rhea" id="RHEA-COMP:10245"/>
        <dbReference type="ChEBI" id="CHEBI:15378"/>
        <dbReference type="ChEBI" id="CHEBI:57856"/>
        <dbReference type="ChEBI" id="CHEBI:59789"/>
        <dbReference type="ChEBI" id="CHEBI:74495"/>
        <dbReference type="ChEBI" id="CHEBI:82748"/>
        <dbReference type="EC" id="2.1.1.186"/>
    </reaction>
</comment>
<comment type="subunit">
    <text evidence="1">Monomer.</text>
</comment>
<comment type="subcellular location">
    <subcellularLocation>
        <location evidence="1">Cytoplasm</location>
    </subcellularLocation>
</comment>
<comment type="similarity">
    <text evidence="1">Belongs to the class I-like SAM-binding methyltransferase superfamily. RNA methyltransferase RlmE family. RlmM subfamily.</text>
</comment>
<proteinExistence type="inferred from homology"/>
<gene>
    <name evidence="1" type="primary">rlmM</name>
    <name type="ordered locus">AHA_1150</name>
</gene>
<keyword id="KW-0963">Cytoplasm</keyword>
<keyword id="KW-0489">Methyltransferase</keyword>
<keyword id="KW-1185">Reference proteome</keyword>
<keyword id="KW-0698">rRNA processing</keyword>
<keyword id="KW-0949">S-adenosyl-L-methionine</keyword>
<keyword id="KW-0808">Transferase</keyword>
<sequence>MNNLLLYCRPGFEKEAAAEITERASNMQCYGFARVKDDSGYVIFELYDEEQADLLARKLPFRELIFIRQMLVVTHELKDLDLSDRITPILEATQGYAICGDLRVETADTNEAKELSAFCRKFTVPLRQALRGNELLTKKETPHRPVFHAFFLANDHVLLGYSYSFNNSEFHMGIPRLRCPADAPSRSSLKLEEAFYVFVPREEWDMRLTSGMKAVDLGACPGGWTYQLVRRGMMVTAVDNGMMAQSLMDTGQVKHIRDDGFVWRPSKKNTYWLVCDMVDKPARVTHMIADWFRESDCQEAMFNLKLPMKKRYAEAVHNIEVLRELLKEIDNAFVIQAKQLYHDREEITVHVYNKYWVSKLSAKE</sequence>
<name>RLMM_AERHH</name>
<dbReference type="EC" id="2.1.1.186" evidence="1"/>
<dbReference type="EMBL" id="CP000462">
    <property type="protein sequence ID" value="ABK37535.1"/>
    <property type="molecule type" value="Genomic_DNA"/>
</dbReference>
<dbReference type="RefSeq" id="WP_011705072.1">
    <property type="nucleotide sequence ID" value="NC_008570.1"/>
</dbReference>
<dbReference type="RefSeq" id="YP_855691.1">
    <property type="nucleotide sequence ID" value="NC_008570.1"/>
</dbReference>
<dbReference type="SMR" id="A0KHE0"/>
<dbReference type="STRING" id="380703.AHA_1150"/>
<dbReference type="EnsemblBacteria" id="ABK37535">
    <property type="protein sequence ID" value="ABK37535"/>
    <property type="gene ID" value="AHA_1150"/>
</dbReference>
<dbReference type="GeneID" id="4489948"/>
<dbReference type="KEGG" id="aha:AHA_1150"/>
<dbReference type="PATRIC" id="fig|380703.7.peg.1155"/>
<dbReference type="eggNOG" id="COG2933">
    <property type="taxonomic scope" value="Bacteria"/>
</dbReference>
<dbReference type="HOGENOM" id="CLU_043780_0_0_6"/>
<dbReference type="OrthoDB" id="154490at2"/>
<dbReference type="Proteomes" id="UP000000756">
    <property type="component" value="Chromosome"/>
</dbReference>
<dbReference type="GO" id="GO:0005737">
    <property type="term" value="C:cytoplasm"/>
    <property type="evidence" value="ECO:0007669"/>
    <property type="project" value="UniProtKB-SubCell"/>
</dbReference>
<dbReference type="GO" id="GO:0008757">
    <property type="term" value="F:S-adenosylmethionine-dependent methyltransferase activity"/>
    <property type="evidence" value="ECO:0007669"/>
    <property type="project" value="UniProtKB-UniRule"/>
</dbReference>
<dbReference type="GO" id="GO:0032259">
    <property type="term" value="P:methylation"/>
    <property type="evidence" value="ECO:0007669"/>
    <property type="project" value="UniProtKB-KW"/>
</dbReference>
<dbReference type="GO" id="GO:0006364">
    <property type="term" value="P:rRNA processing"/>
    <property type="evidence" value="ECO:0007669"/>
    <property type="project" value="UniProtKB-UniRule"/>
</dbReference>
<dbReference type="Gene3D" id="3.30.2300.20">
    <property type="match status" value="1"/>
</dbReference>
<dbReference type="Gene3D" id="3.30.70.2810">
    <property type="match status" value="1"/>
</dbReference>
<dbReference type="Gene3D" id="3.40.50.150">
    <property type="entry name" value="Vaccinia Virus protein VP39"/>
    <property type="match status" value="1"/>
</dbReference>
<dbReference type="HAMAP" id="MF_01551">
    <property type="entry name" value="23SrRNA_methyltr_M"/>
    <property type="match status" value="1"/>
</dbReference>
<dbReference type="InterPro" id="IPR040739">
    <property type="entry name" value="RlmM_FDX"/>
</dbReference>
<dbReference type="InterPro" id="IPR048646">
    <property type="entry name" value="RlmM_THUMP-like"/>
</dbReference>
<dbReference type="InterPro" id="IPR002877">
    <property type="entry name" value="RNA_MeTrfase_FtsJ_dom"/>
</dbReference>
<dbReference type="InterPro" id="IPR011224">
    <property type="entry name" value="rRNA_MeTrfase_M"/>
</dbReference>
<dbReference type="InterPro" id="IPR029063">
    <property type="entry name" value="SAM-dependent_MTases_sf"/>
</dbReference>
<dbReference type="NCBIfam" id="NF008734">
    <property type="entry name" value="PRK11760.1"/>
    <property type="match status" value="1"/>
</dbReference>
<dbReference type="PANTHER" id="PTHR37524">
    <property type="entry name" value="RIBOSOMAL RNA LARGE SUBUNIT METHYLTRANSFERASE M"/>
    <property type="match status" value="1"/>
</dbReference>
<dbReference type="PANTHER" id="PTHR37524:SF2">
    <property type="entry name" value="RIBOSOMAL RNA METHYLTRANSFERASE FTSJ DOMAIN-CONTAINING PROTEIN"/>
    <property type="match status" value="1"/>
</dbReference>
<dbReference type="Pfam" id="PF01728">
    <property type="entry name" value="FtsJ"/>
    <property type="match status" value="1"/>
</dbReference>
<dbReference type="Pfam" id="PF18125">
    <property type="entry name" value="RlmM_FDX"/>
    <property type="match status" value="1"/>
</dbReference>
<dbReference type="Pfam" id="PF21239">
    <property type="entry name" value="RLMM_N"/>
    <property type="match status" value="1"/>
</dbReference>
<dbReference type="PIRSF" id="PIRSF028774">
    <property type="entry name" value="UCP028774"/>
    <property type="match status" value="1"/>
</dbReference>
<dbReference type="SUPFAM" id="SSF53335">
    <property type="entry name" value="S-adenosyl-L-methionine-dependent methyltransferases"/>
    <property type="match status" value="1"/>
</dbReference>
<organism>
    <name type="scientific">Aeromonas hydrophila subsp. hydrophila (strain ATCC 7966 / DSM 30187 / BCRC 13018 / CCUG 14551 / JCM 1027 / KCTC 2358 / NCIMB 9240 / NCTC 8049)</name>
    <dbReference type="NCBI Taxonomy" id="380703"/>
    <lineage>
        <taxon>Bacteria</taxon>
        <taxon>Pseudomonadati</taxon>
        <taxon>Pseudomonadota</taxon>
        <taxon>Gammaproteobacteria</taxon>
        <taxon>Aeromonadales</taxon>
        <taxon>Aeromonadaceae</taxon>
        <taxon>Aeromonas</taxon>
    </lineage>
</organism>
<feature type="chain" id="PRO_0000314505" description="Ribosomal RNA large subunit methyltransferase M">
    <location>
        <begin position="1"/>
        <end position="364"/>
    </location>
</feature>
<feature type="active site" description="Proton acceptor" evidence="1">
    <location>
        <position position="305"/>
    </location>
</feature>
<feature type="binding site" evidence="1">
    <location>
        <position position="187"/>
    </location>
    <ligand>
        <name>S-adenosyl-L-methionine</name>
        <dbReference type="ChEBI" id="CHEBI:59789"/>
    </ligand>
</feature>
<feature type="binding site" evidence="1">
    <location>
        <begin position="220"/>
        <end position="223"/>
    </location>
    <ligand>
        <name>S-adenosyl-L-methionine</name>
        <dbReference type="ChEBI" id="CHEBI:59789"/>
    </ligand>
</feature>
<feature type="binding site" evidence="1">
    <location>
        <position position="239"/>
    </location>
    <ligand>
        <name>S-adenosyl-L-methionine</name>
        <dbReference type="ChEBI" id="CHEBI:59789"/>
    </ligand>
</feature>
<feature type="binding site" evidence="1">
    <location>
        <position position="259"/>
    </location>
    <ligand>
        <name>S-adenosyl-L-methionine</name>
        <dbReference type="ChEBI" id="CHEBI:59789"/>
    </ligand>
</feature>
<feature type="binding site" evidence="1">
    <location>
        <position position="276"/>
    </location>
    <ligand>
        <name>S-adenosyl-L-methionine</name>
        <dbReference type="ChEBI" id="CHEBI:59789"/>
    </ligand>
</feature>